<reference key="1">
    <citation type="journal article" date="2007" name="Science">
        <title>The Fusarium graminearum genome reveals a link between localized polymorphism and pathogen specialization.</title>
        <authorList>
            <person name="Cuomo C.A."/>
            <person name="Gueldener U."/>
            <person name="Xu J.-R."/>
            <person name="Trail F."/>
            <person name="Turgeon B.G."/>
            <person name="Di Pietro A."/>
            <person name="Walton J.D."/>
            <person name="Ma L.-J."/>
            <person name="Baker S.E."/>
            <person name="Rep M."/>
            <person name="Adam G."/>
            <person name="Antoniw J."/>
            <person name="Baldwin T."/>
            <person name="Calvo S.E."/>
            <person name="Chang Y.-L."/>
            <person name="DeCaprio D."/>
            <person name="Gale L.R."/>
            <person name="Gnerre S."/>
            <person name="Goswami R.S."/>
            <person name="Hammond-Kosack K."/>
            <person name="Harris L.J."/>
            <person name="Hilburn K."/>
            <person name="Kennell J.C."/>
            <person name="Kroken S."/>
            <person name="Magnuson J.K."/>
            <person name="Mannhaupt G."/>
            <person name="Mauceli E.W."/>
            <person name="Mewes H.-W."/>
            <person name="Mitterbauer R."/>
            <person name="Muehlbauer G."/>
            <person name="Muensterkoetter M."/>
            <person name="Nelson D."/>
            <person name="O'Donnell K."/>
            <person name="Ouellet T."/>
            <person name="Qi W."/>
            <person name="Quesneville H."/>
            <person name="Roncero M.I.G."/>
            <person name="Seong K.-Y."/>
            <person name="Tetko I.V."/>
            <person name="Urban M."/>
            <person name="Waalwijk C."/>
            <person name="Ward T.J."/>
            <person name="Yao J."/>
            <person name="Birren B.W."/>
            <person name="Kistler H.C."/>
        </authorList>
    </citation>
    <scope>NUCLEOTIDE SEQUENCE [LARGE SCALE GENOMIC DNA]</scope>
    <source>
        <strain>ATCC MYA-4620 / CBS 123657 / FGSC 9075 / NRRL 31084 / PH-1</strain>
    </source>
</reference>
<reference key="2">
    <citation type="journal article" date="2010" name="Nature">
        <title>Comparative genomics reveals mobile pathogenicity chromosomes in Fusarium.</title>
        <authorList>
            <person name="Ma L.-J."/>
            <person name="van der Does H.C."/>
            <person name="Borkovich K.A."/>
            <person name="Coleman J.J."/>
            <person name="Daboussi M.-J."/>
            <person name="Di Pietro A."/>
            <person name="Dufresne M."/>
            <person name="Freitag M."/>
            <person name="Grabherr M."/>
            <person name="Henrissat B."/>
            <person name="Houterman P.M."/>
            <person name="Kang S."/>
            <person name="Shim W.-B."/>
            <person name="Woloshuk C."/>
            <person name="Xie X."/>
            <person name="Xu J.-R."/>
            <person name="Antoniw J."/>
            <person name="Baker S.E."/>
            <person name="Bluhm B.H."/>
            <person name="Breakspear A."/>
            <person name="Brown D.W."/>
            <person name="Butchko R.A.E."/>
            <person name="Chapman S."/>
            <person name="Coulson R."/>
            <person name="Coutinho P.M."/>
            <person name="Danchin E.G.J."/>
            <person name="Diener A."/>
            <person name="Gale L.R."/>
            <person name="Gardiner D.M."/>
            <person name="Goff S."/>
            <person name="Hammond-Kosack K.E."/>
            <person name="Hilburn K."/>
            <person name="Hua-Van A."/>
            <person name="Jonkers W."/>
            <person name="Kazan K."/>
            <person name="Kodira C.D."/>
            <person name="Koehrsen M."/>
            <person name="Kumar L."/>
            <person name="Lee Y.-H."/>
            <person name="Li L."/>
            <person name="Manners J.M."/>
            <person name="Miranda-Saavedra D."/>
            <person name="Mukherjee M."/>
            <person name="Park G."/>
            <person name="Park J."/>
            <person name="Park S.-Y."/>
            <person name="Proctor R.H."/>
            <person name="Regev A."/>
            <person name="Ruiz-Roldan M.C."/>
            <person name="Sain D."/>
            <person name="Sakthikumar S."/>
            <person name="Sykes S."/>
            <person name="Schwartz D.C."/>
            <person name="Turgeon B.G."/>
            <person name="Wapinski I."/>
            <person name="Yoder O."/>
            <person name="Young S."/>
            <person name="Zeng Q."/>
            <person name="Zhou S."/>
            <person name="Galagan J."/>
            <person name="Cuomo C.A."/>
            <person name="Kistler H.C."/>
            <person name="Rep M."/>
        </authorList>
    </citation>
    <scope>GENOME REANNOTATION</scope>
    <source>
        <strain>ATCC MYA-4620 / CBS 123657 / FGSC 9075 / NRRL 31084 / PH-1</strain>
    </source>
</reference>
<reference key="3">
    <citation type="journal article" date="2015" name="BMC Genomics">
        <title>The completed genome sequence of the pathogenic ascomycete fungus Fusarium graminearum.</title>
        <authorList>
            <person name="King R."/>
            <person name="Urban M."/>
            <person name="Hammond-Kosack M.C.U."/>
            <person name="Hassani-Pak K."/>
            <person name="Hammond-Kosack K.E."/>
        </authorList>
    </citation>
    <scope>NUCLEOTIDE SEQUENCE [LARGE SCALE GENOMIC DNA]</scope>
    <source>
        <strain>ATCC MYA-4620 / CBS 123657 / FGSC 9075 / NRRL 31084 / PH-1</strain>
    </source>
</reference>
<gene>
    <name type="primary">MIA40</name>
    <name type="synonym">TIM40</name>
    <name type="ORF">FGRRES_02455</name>
    <name type="ORF">FGSG_02455</name>
</gene>
<feature type="transit peptide" description="Mitochondrion" evidence="2">
    <location>
        <begin position="1"/>
        <end position="29"/>
    </location>
</feature>
<feature type="chain" id="PRO_0000235290" description="Mitochondrial intermembrane space import and assembly protein 40">
    <location>
        <begin position="30"/>
        <end position="368"/>
    </location>
</feature>
<feature type="topological domain" description="Mitochondrial matrix" evidence="2">
    <location>
        <begin position="30"/>
        <end position="47"/>
    </location>
</feature>
<feature type="transmembrane region" description="Helical; Signal-anchor for type II membrane protein" evidence="2">
    <location>
        <begin position="48"/>
        <end position="65"/>
    </location>
</feature>
<feature type="topological domain" description="Mitochondrial intermembrane" evidence="2">
    <location>
        <begin position="66"/>
        <end position="368"/>
    </location>
</feature>
<feature type="domain" description="CHCH" evidence="3">
    <location>
        <begin position="160"/>
        <end position="204"/>
    </location>
</feature>
<feature type="region of interest" description="Disordered" evidence="4">
    <location>
        <begin position="95"/>
        <end position="144"/>
    </location>
</feature>
<feature type="region of interest" description="Disordered" evidence="4">
    <location>
        <begin position="208"/>
        <end position="310"/>
    </location>
</feature>
<feature type="short sequence motif" description="Cx9C motif 1" evidence="3">
    <location>
        <begin position="163"/>
        <end position="173"/>
    </location>
</feature>
<feature type="short sequence motif" description="Cx9C motif 2" evidence="3">
    <location>
        <begin position="186"/>
        <end position="196"/>
    </location>
</feature>
<feature type="compositionally biased region" description="Basic and acidic residues" evidence="4">
    <location>
        <begin position="95"/>
        <end position="104"/>
    </location>
</feature>
<feature type="compositionally biased region" description="Polar residues" evidence="4">
    <location>
        <begin position="105"/>
        <end position="121"/>
    </location>
</feature>
<feature type="compositionally biased region" description="Basic and acidic residues" evidence="4">
    <location>
        <begin position="240"/>
        <end position="263"/>
    </location>
</feature>
<feature type="compositionally biased region" description="Low complexity" evidence="4">
    <location>
        <begin position="264"/>
        <end position="280"/>
    </location>
</feature>
<feature type="compositionally biased region" description="Basic and acidic residues" evidence="4">
    <location>
        <begin position="283"/>
        <end position="295"/>
    </location>
</feature>
<feature type="disulfide bond" description="Redox-active" evidence="1">
    <location>
        <begin position="152"/>
        <end position="154"/>
    </location>
</feature>
<feature type="disulfide bond" evidence="3">
    <location>
        <begin position="163"/>
        <end position="196"/>
    </location>
</feature>
<feature type="disulfide bond" evidence="3">
    <location>
        <begin position="173"/>
        <end position="186"/>
    </location>
</feature>
<comment type="function">
    <text evidence="1">Required for the import and folding of small cysteine-containing proteins (small Tim) in the mitochondrial intermembrane space (IMS). Forms a redox cycle with ERV1 that involves a disulfide relay system. Precursor proteins to be imported into the IMS are translocated in their reduced form into the mitochondria. The oxidized form of MIA40 forms a transient intermolecular disulfide bridge with the reduced precursor protein, resulting in oxidation of the precursor protein that now contains an intramolecular disulfide bond and is able to undergo folding in the IMS (By similarity).</text>
</comment>
<comment type="cofactor">
    <cofactor evidence="1">
        <name>Cu(2+)</name>
        <dbReference type="ChEBI" id="CHEBI:29036"/>
    </cofactor>
    <cofactor evidence="1">
        <name>Zn(2+)</name>
        <dbReference type="ChEBI" id="CHEBI:29105"/>
    </cofactor>
    <text evidence="1">Cu(2+) or Zn(2+).</text>
</comment>
<comment type="subunit">
    <text evidence="1">Monomer.</text>
</comment>
<comment type="subcellular location">
    <subcellularLocation>
        <location evidence="1">Mitochondrion inner membrane</location>
        <topology evidence="1">Single-pass type II membrane protein</topology>
        <orientation evidence="1">Intermembrane side</orientation>
    </subcellularLocation>
</comment>
<comment type="domain">
    <text evidence="1">The CHCH domain contains a conserved twin Cys-X(9)-Cys motif which is required for import and stability of MIA40 in mitochondria.</text>
</comment>
<protein>
    <recommendedName>
        <fullName>Mitochondrial intermembrane space import and assembly protein 40</fullName>
    </recommendedName>
    <alternativeName>
        <fullName>Mitochondrial import inner membrane translocase TIM40</fullName>
    </alternativeName>
</protein>
<accession>Q4IK03</accession>
<accession>A0A0E0RU24</accession>
<accession>I1RFI0</accession>
<accession>V6R1U2</accession>
<evidence type="ECO:0000250" key="1"/>
<evidence type="ECO:0000255" key="2"/>
<evidence type="ECO:0000255" key="3">
    <source>
        <dbReference type="PROSITE-ProRule" id="PRU01150"/>
    </source>
</evidence>
<evidence type="ECO:0000256" key="4">
    <source>
        <dbReference type="SAM" id="MobiDB-lite"/>
    </source>
</evidence>
<proteinExistence type="inferred from homology"/>
<name>MIA40_GIBZE</name>
<organism>
    <name type="scientific">Gibberella zeae (strain ATCC MYA-4620 / CBS 123657 / FGSC 9075 / NRRL 31084 / PH-1)</name>
    <name type="common">Wheat head blight fungus</name>
    <name type="synonym">Fusarium graminearum</name>
    <dbReference type="NCBI Taxonomy" id="229533"/>
    <lineage>
        <taxon>Eukaryota</taxon>
        <taxon>Fungi</taxon>
        <taxon>Dikarya</taxon>
        <taxon>Ascomycota</taxon>
        <taxon>Pezizomycotina</taxon>
        <taxon>Sordariomycetes</taxon>
        <taxon>Hypocreomycetidae</taxon>
        <taxon>Hypocreales</taxon>
        <taxon>Nectriaceae</taxon>
        <taxon>Fusarium</taxon>
    </lineage>
</organism>
<dbReference type="EMBL" id="DS231663">
    <property type="protein sequence ID" value="ESU07892.1"/>
    <property type="molecule type" value="Genomic_DNA"/>
</dbReference>
<dbReference type="EMBL" id="HG970332">
    <property type="protein sequence ID" value="CEF74749.1"/>
    <property type="molecule type" value="Genomic_DNA"/>
</dbReference>
<dbReference type="RefSeq" id="XP_011318377.1">
    <property type="nucleotide sequence ID" value="XM_011320075.1"/>
</dbReference>
<dbReference type="SMR" id="Q4IK03"/>
<dbReference type="STRING" id="229533.Q4IK03"/>
<dbReference type="GeneID" id="23549830"/>
<dbReference type="KEGG" id="fgr:FGSG_02455"/>
<dbReference type="VEuPathDB" id="FungiDB:FGRAMPH1_01G05889"/>
<dbReference type="eggNOG" id="KOG4149">
    <property type="taxonomic scope" value="Eukaryota"/>
</dbReference>
<dbReference type="HOGENOM" id="CLU_054990_0_1_1"/>
<dbReference type="InParanoid" id="Q4IK03"/>
<dbReference type="OrthoDB" id="134606at110618"/>
<dbReference type="Proteomes" id="UP000070720">
    <property type="component" value="Chromosome 1"/>
</dbReference>
<dbReference type="GO" id="GO:0005743">
    <property type="term" value="C:mitochondrial inner membrane"/>
    <property type="evidence" value="ECO:0007669"/>
    <property type="project" value="UniProtKB-SubCell"/>
</dbReference>
<dbReference type="GO" id="GO:0005758">
    <property type="term" value="C:mitochondrial intermembrane space"/>
    <property type="evidence" value="ECO:0007669"/>
    <property type="project" value="TreeGrafter"/>
</dbReference>
<dbReference type="GO" id="GO:0015035">
    <property type="term" value="F:protein-disulfide reductase activity"/>
    <property type="evidence" value="ECO:0007669"/>
    <property type="project" value="InterPro"/>
</dbReference>
<dbReference type="GO" id="GO:0045041">
    <property type="term" value="P:protein import into mitochondrial intermembrane space"/>
    <property type="evidence" value="ECO:0007669"/>
    <property type="project" value="InterPro"/>
</dbReference>
<dbReference type="FunFam" id="1.10.287.2900:FF:000002">
    <property type="entry name" value="Mitochondrial intermembrane space import and assembly protein"/>
    <property type="match status" value="1"/>
</dbReference>
<dbReference type="Gene3D" id="1.10.287.2900">
    <property type="match status" value="1"/>
</dbReference>
<dbReference type="InterPro" id="IPR039289">
    <property type="entry name" value="CHCHD4"/>
</dbReference>
<dbReference type="PANTHER" id="PTHR21622">
    <property type="entry name" value="COILED-COIL-HELIX-COILED-COIL-HELIX DOMAIN CONTAINING 4"/>
    <property type="match status" value="1"/>
</dbReference>
<dbReference type="PANTHER" id="PTHR21622:SF0">
    <property type="entry name" value="COILED-COIL-HELIX-COILED-COIL-HELIX DOMAIN CONTAINING 4"/>
    <property type="match status" value="1"/>
</dbReference>
<dbReference type="PROSITE" id="PS51808">
    <property type="entry name" value="CHCH"/>
    <property type="match status" value="1"/>
</dbReference>
<keyword id="KW-1015">Disulfide bond</keyword>
<keyword id="KW-0472">Membrane</keyword>
<keyword id="KW-0496">Mitochondrion</keyword>
<keyword id="KW-0999">Mitochondrion inner membrane</keyword>
<keyword id="KW-0560">Oxidoreductase</keyword>
<keyword id="KW-0653">Protein transport</keyword>
<keyword id="KW-0676">Redox-active center</keyword>
<keyword id="KW-1185">Reference proteome</keyword>
<keyword id="KW-0735">Signal-anchor</keyword>
<keyword id="KW-0809">Transit peptide</keyword>
<keyword id="KW-0811">Translocation</keyword>
<keyword id="KW-0812">Transmembrane</keyword>
<keyword id="KW-1133">Transmembrane helix</keyword>
<keyword id="KW-0813">Transport</keyword>
<sequence length="368" mass="39753">MYRNTMRSASRPVIASLRSSTIRAAPRRFASTAPADKPRSFKGSLVRLGLAFGAVYYYNTSPIFADEAISKTVPAPAAFSDDDLPTVDSIVEEKRKQIKAKSEETAASSKTPESQQSNPQTAAADGSPAALEEEAGQQGAFNPETGEINWDCPCLGGMADGPCGEEFKTAFSCFVFSQEEPKGMDCIDKFQGMQECFKKYPDIYGAELADDEDGAPTPDFGDEQPSGEPTTAEVKSNGELARETKDKTAADATKFDDSQKPAESKTPAKTTSTSTDSAQKPAVDAHRDAEPKSDAETASSGSRMVQDVAIPIEKPVNDKYWQDMHKSEVQKKEVTVGITQAHDATAANEEIKHIERQEAAKKNAEKKQ</sequence>